<evidence type="ECO:0000250" key="1"/>
<evidence type="ECO:0000255" key="2"/>
<evidence type="ECO:0000255" key="3">
    <source>
        <dbReference type="PROSITE-ProRule" id="PRU01103"/>
    </source>
</evidence>
<evidence type="ECO:0000255" key="4">
    <source>
        <dbReference type="PROSITE-ProRule" id="PRU10094"/>
    </source>
</evidence>
<evidence type="ECO:0000305" key="5"/>
<feature type="signal peptide" evidence="2">
    <location>
        <begin position="1"/>
        <end position="15"/>
    </location>
</feature>
<feature type="propeptide" id="PRO_0000026011" description="Activation peptide" evidence="1">
    <location>
        <begin position="16"/>
        <end position="60"/>
    </location>
</feature>
<feature type="chain" id="PRO_0000026012" description="Pepsin A">
    <location>
        <begin position="61"/>
        <end position="386"/>
    </location>
</feature>
<feature type="domain" description="Peptidase A1" evidence="3">
    <location>
        <begin position="74"/>
        <end position="383"/>
    </location>
</feature>
<feature type="active site" evidence="4">
    <location>
        <position position="92"/>
    </location>
</feature>
<feature type="active site" evidence="4">
    <location>
        <position position="275"/>
    </location>
</feature>
<feature type="disulfide bond" evidence="1">
    <location>
        <begin position="105"/>
        <end position="110"/>
    </location>
</feature>
<feature type="disulfide bond" evidence="1">
    <location>
        <begin position="266"/>
        <end position="270"/>
    </location>
</feature>
<feature type="disulfide bond" evidence="1">
    <location>
        <begin position="309"/>
        <end position="342"/>
    </location>
</feature>
<accession>Q9GMY6</accession>
<keyword id="KW-0064">Aspartyl protease</keyword>
<keyword id="KW-0222">Digestion</keyword>
<keyword id="KW-1015">Disulfide bond</keyword>
<keyword id="KW-0378">Hydrolase</keyword>
<keyword id="KW-0645">Protease</keyword>
<keyword id="KW-1185">Reference proteome</keyword>
<keyword id="KW-0964">Secreted</keyword>
<keyword id="KW-0732">Signal</keyword>
<keyword id="KW-0865">Zymogen</keyword>
<dbReference type="EC" id="3.4.23.1"/>
<dbReference type="EMBL" id="AB047246">
    <property type="protein sequence ID" value="BAB11752.1"/>
    <property type="molecule type" value="mRNA"/>
</dbReference>
<dbReference type="RefSeq" id="NP_001003117.1">
    <property type="nucleotide sequence ID" value="NM_001003117.1"/>
</dbReference>
<dbReference type="SMR" id="Q9GMY6"/>
<dbReference type="FunCoup" id="Q9GMY6">
    <property type="interactions" value="34"/>
</dbReference>
<dbReference type="MEROPS" id="A01.001"/>
<dbReference type="PaxDb" id="9612-ENSCAFP00000024018"/>
<dbReference type="Ensembl" id="ENSCAFT00845023744.1">
    <property type="protein sequence ID" value="ENSCAFP00845018630.1"/>
    <property type="gene ID" value="ENSCAFG00845013325.1"/>
</dbReference>
<dbReference type="GeneID" id="403711"/>
<dbReference type="KEGG" id="cfa:403711"/>
<dbReference type="CTD" id="403711"/>
<dbReference type="VEuPathDB" id="HostDB:ENSCAFG00845013325"/>
<dbReference type="eggNOG" id="KOG1339">
    <property type="taxonomic scope" value="Eukaryota"/>
</dbReference>
<dbReference type="GeneTree" id="ENSGT00940000155036"/>
<dbReference type="InParanoid" id="Q9GMY6"/>
<dbReference type="OrthoDB" id="771136at2759"/>
<dbReference type="Reactome" id="R-CFA-5683826">
    <property type="pathway name" value="Surfactant metabolism"/>
</dbReference>
<dbReference type="Proteomes" id="UP000002254">
    <property type="component" value="Unplaced"/>
</dbReference>
<dbReference type="Proteomes" id="UP000694429">
    <property type="component" value="Unplaced"/>
</dbReference>
<dbReference type="Proteomes" id="UP000694542">
    <property type="component" value="Unplaced"/>
</dbReference>
<dbReference type="Proteomes" id="UP000805418">
    <property type="component" value="Chromosome 18"/>
</dbReference>
<dbReference type="GO" id="GO:0005576">
    <property type="term" value="C:extracellular region"/>
    <property type="evidence" value="ECO:0007669"/>
    <property type="project" value="UniProtKB-SubCell"/>
</dbReference>
<dbReference type="GO" id="GO:0004190">
    <property type="term" value="F:aspartic-type endopeptidase activity"/>
    <property type="evidence" value="ECO:0000318"/>
    <property type="project" value="GO_Central"/>
</dbReference>
<dbReference type="GO" id="GO:0007586">
    <property type="term" value="P:digestion"/>
    <property type="evidence" value="ECO:0007669"/>
    <property type="project" value="UniProtKB-KW"/>
</dbReference>
<dbReference type="GO" id="GO:0006508">
    <property type="term" value="P:proteolysis"/>
    <property type="evidence" value="ECO:0000318"/>
    <property type="project" value="GO_Central"/>
</dbReference>
<dbReference type="CDD" id="cd05478">
    <property type="entry name" value="pepsin_A"/>
    <property type="match status" value="1"/>
</dbReference>
<dbReference type="FunFam" id="2.40.70.10:FF:000006">
    <property type="entry name" value="Cathepsin E"/>
    <property type="match status" value="1"/>
</dbReference>
<dbReference type="FunFam" id="2.40.70.10:FF:000004">
    <property type="entry name" value="Pepsin A"/>
    <property type="match status" value="1"/>
</dbReference>
<dbReference type="Gene3D" id="6.10.140.60">
    <property type="match status" value="1"/>
</dbReference>
<dbReference type="Gene3D" id="2.40.70.10">
    <property type="entry name" value="Acid Proteases"/>
    <property type="match status" value="2"/>
</dbReference>
<dbReference type="InterPro" id="IPR001461">
    <property type="entry name" value="Aspartic_peptidase_A1"/>
</dbReference>
<dbReference type="InterPro" id="IPR001969">
    <property type="entry name" value="Aspartic_peptidase_AS"/>
</dbReference>
<dbReference type="InterPro" id="IPR012848">
    <property type="entry name" value="Aspartic_peptidase_N"/>
</dbReference>
<dbReference type="InterPro" id="IPR034162">
    <property type="entry name" value="Pepsin_A"/>
</dbReference>
<dbReference type="InterPro" id="IPR033121">
    <property type="entry name" value="PEPTIDASE_A1"/>
</dbReference>
<dbReference type="InterPro" id="IPR021109">
    <property type="entry name" value="Peptidase_aspartic_dom_sf"/>
</dbReference>
<dbReference type="PANTHER" id="PTHR47966">
    <property type="entry name" value="BETA-SITE APP-CLEAVING ENZYME, ISOFORM A-RELATED"/>
    <property type="match status" value="1"/>
</dbReference>
<dbReference type="PANTHER" id="PTHR47966:SF22">
    <property type="entry name" value="PEPSIN A-3-RELATED"/>
    <property type="match status" value="1"/>
</dbReference>
<dbReference type="Pfam" id="PF07966">
    <property type="entry name" value="A1_Propeptide"/>
    <property type="match status" value="1"/>
</dbReference>
<dbReference type="Pfam" id="PF00026">
    <property type="entry name" value="Asp"/>
    <property type="match status" value="1"/>
</dbReference>
<dbReference type="PRINTS" id="PR00792">
    <property type="entry name" value="PEPSIN"/>
</dbReference>
<dbReference type="SUPFAM" id="SSF50630">
    <property type="entry name" value="Acid proteases"/>
    <property type="match status" value="1"/>
</dbReference>
<dbReference type="PROSITE" id="PS00141">
    <property type="entry name" value="ASP_PROTEASE"/>
    <property type="match status" value="2"/>
</dbReference>
<dbReference type="PROSITE" id="PS51767">
    <property type="entry name" value="PEPTIDASE_A1"/>
    <property type="match status" value="1"/>
</dbReference>
<proteinExistence type="evidence at transcript level"/>
<gene>
    <name type="primary">PGA</name>
    <name type="synonym">PGNA</name>
</gene>
<protein>
    <recommendedName>
        <fullName>Pepsin A</fullName>
        <ecNumber>3.4.23.1</ecNumber>
    </recommendedName>
</protein>
<sequence length="386" mass="41551">MKWLLLISLVALSECAIVKVPLVRKKSLRQNLIEHGLLNDFLKNQSPNPASKYFPQEPTVLATQSLKNYMDMEYFGTIGIGTPPQEFTVIFDTGSSNLWVPSVYCSSPACSNHNRFNPQESSTYQGTNRPVSIAYGTGSMTGILGYDTVQVGGIADTNQIFGLSETEPGSFLYYAPFDGILGLAYPQISASGATPVFDNMWNEGLVSQDLFSVYLSSDDQSGSVVMFGGIDSSYYSGNLNWVPVSVEGYWQITVDSVTMNGQAIACSDGCQAIVDTGTSLLAGPTNAIANIQSYIGASQNSYGQMVISCSAINSLPDIVFTINGIQYPLPPSAYILQSQQGCVSGFQGMNLPTASGELWILGDVFIRQYFAVFDRANNQVGLAPVA</sequence>
<organism>
    <name type="scientific">Canis lupus familiaris</name>
    <name type="common">Dog</name>
    <name type="synonym">Canis familiaris</name>
    <dbReference type="NCBI Taxonomy" id="9615"/>
    <lineage>
        <taxon>Eukaryota</taxon>
        <taxon>Metazoa</taxon>
        <taxon>Chordata</taxon>
        <taxon>Craniata</taxon>
        <taxon>Vertebrata</taxon>
        <taxon>Euteleostomi</taxon>
        <taxon>Mammalia</taxon>
        <taxon>Eutheria</taxon>
        <taxon>Laurasiatheria</taxon>
        <taxon>Carnivora</taxon>
        <taxon>Caniformia</taxon>
        <taxon>Canidae</taxon>
        <taxon>Canis</taxon>
    </lineage>
</organism>
<comment type="function">
    <text evidence="1">Shows particularly broad specificity; although bonds involving phenylalanine and leucine are preferred, many others are also cleaved to some extent.</text>
</comment>
<comment type="catalytic activity">
    <reaction evidence="4">
        <text>Preferential cleavage: hydrophobic, preferably aromatic, residues in P1 and P1' positions. Cleaves 1-Phe-|-Val-2, 4-Gln-|-His-5, 13-Glu-|-Ala-14, 14-Ala-|-Leu-15, 15-Leu-|-Tyr-16, 16-Tyr-|-Leu-17, 23-Gly-|-Phe-24, 24-Phe-|-Phe-25 and 25-Phe-|-Tyr-26 bonds in the B chain of insulin.</text>
        <dbReference type="EC" id="3.4.23.1"/>
    </reaction>
</comment>
<comment type="subcellular location">
    <subcellularLocation>
        <location>Secreted</location>
    </subcellularLocation>
</comment>
<comment type="similarity">
    <text evidence="5">Belongs to the peptidase A1 family.</text>
</comment>
<reference key="1">
    <citation type="journal article" date="2001" name="Mol. Phylogenet. Evol.">
        <title>Phylogenetic position of Eulipotyphla inferred from the cDNA sequences of pepsinogens A and C.</title>
        <authorList>
            <person name="Narita Y."/>
            <person name="Oda S."/>
            <person name="Takenaka O."/>
            <person name="Kageyama T."/>
        </authorList>
    </citation>
    <scope>NUCLEOTIDE SEQUENCE [MRNA]</scope>
</reference>
<name>PEPA_CANLF</name>